<reference key="1">
    <citation type="submission" date="2006-03" db="EMBL/GenBank/DDBJ databases">
        <title>Complete genome sequence of Francisella tularensis LVS (Live Vaccine Strain).</title>
        <authorList>
            <person name="Chain P."/>
            <person name="Larimer F."/>
            <person name="Land M."/>
            <person name="Stilwagen S."/>
            <person name="Larsson P."/>
            <person name="Bearden S."/>
            <person name="Chu M."/>
            <person name="Oyston P."/>
            <person name="Forsman M."/>
            <person name="Andersson S."/>
            <person name="Lindler L."/>
            <person name="Titball R."/>
            <person name="Garcia E."/>
        </authorList>
    </citation>
    <scope>NUCLEOTIDE SEQUENCE [LARGE SCALE GENOMIC DNA]</scope>
    <source>
        <strain>LVS</strain>
    </source>
</reference>
<organism>
    <name type="scientific">Francisella tularensis subsp. holarctica (strain LVS)</name>
    <dbReference type="NCBI Taxonomy" id="376619"/>
    <lineage>
        <taxon>Bacteria</taxon>
        <taxon>Pseudomonadati</taxon>
        <taxon>Pseudomonadota</taxon>
        <taxon>Gammaproteobacteria</taxon>
        <taxon>Thiotrichales</taxon>
        <taxon>Francisellaceae</taxon>
        <taxon>Francisella</taxon>
    </lineage>
</organism>
<sequence>MRTHYSSDINEKLQGQKVTVCGWVHRRRDHGGVIFLDIRDRTGLVQLVFNPDNDNFKVADSLRSEFVIKAEGVVNLRPEGQENKNISSGKVEIIGDSIEVINKSKTIPFQLDDFQSTGEDVKLKYRYIDLRRPEMQHKLITRSKAIRYVRNFLDNNGFLDIETPFLTKATPEGARDYLVPSRNFNGKFYALPQSPQLFKQLLMVSGFDRYYQIVKCFRDEDLRADRQPEFTQIDIEASFIDEAFIMSTMERMIAGLFKETIGVEFATPFQVMTFADAIDKYGSDKPDLRIPLEFVNIKEDMQNEEFKVFSGPANDPQSRVIALRISGGNDKLTRKMIDEYTKFVGIYGAKGLAYIKINSLSQGKEGLQSPIVKNISEETLFKVIEKTSAKEDDLLFFGAGKTKIVNDSMGALRAKIGEDLDLFNKDWAPLWVVDFPMFEKDDNRLYAMHHPFTAPKVSSVEDLVNTNPEELSSRAYDMVINGYEVGGGSIRIHKQDIQAKVFNLLGISDDEAREKFGFMLDALSYGTPIHGGIAFGVDRLIMLLTGTTNIRDVIAFPKTQTASCLMTEAPSTVSLEQLNELGIAVKKEER</sequence>
<dbReference type="EC" id="6.1.1.23" evidence="1"/>
<dbReference type="EMBL" id="AM233362">
    <property type="protein sequence ID" value="CAJ78461.1"/>
    <property type="molecule type" value="Genomic_DNA"/>
</dbReference>
<dbReference type="RefSeq" id="WP_010032850.1">
    <property type="nucleotide sequence ID" value="NZ_CP009694.1"/>
</dbReference>
<dbReference type="SMR" id="Q2A622"/>
<dbReference type="KEGG" id="ftl:FTL_0020"/>
<dbReference type="Proteomes" id="UP000001944">
    <property type="component" value="Chromosome"/>
</dbReference>
<dbReference type="GO" id="GO:0005737">
    <property type="term" value="C:cytoplasm"/>
    <property type="evidence" value="ECO:0007669"/>
    <property type="project" value="UniProtKB-SubCell"/>
</dbReference>
<dbReference type="GO" id="GO:0004815">
    <property type="term" value="F:aspartate-tRNA ligase activity"/>
    <property type="evidence" value="ECO:0007669"/>
    <property type="project" value="UniProtKB-UniRule"/>
</dbReference>
<dbReference type="GO" id="GO:0050560">
    <property type="term" value="F:aspartate-tRNA(Asn) ligase activity"/>
    <property type="evidence" value="ECO:0007669"/>
    <property type="project" value="UniProtKB-EC"/>
</dbReference>
<dbReference type="GO" id="GO:0005524">
    <property type="term" value="F:ATP binding"/>
    <property type="evidence" value="ECO:0007669"/>
    <property type="project" value="UniProtKB-UniRule"/>
</dbReference>
<dbReference type="GO" id="GO:0003676">
    <property type="term" value="F:nucleic acid binding"/>
    <property type="evidence" value="ECO:0007669"/>
    <property type="project" value="InterPro"/>
</dbReference>
<dbReference type="GO" id="GO:0006422">
    <property type="term" value="P:aspartyl-tRNA aminoacylation"/>
    <property type="evidence" value="ECO:0007669"/>
    <property type="project" value="UniProtKB-UniRule"/>
</dbReference>
<dbReference type="CDD" id="cd00777">
    <property type="entry name" value="AspRS_core"/>
    <property type="match status" value="1"/>
</dbReference>
<dbReference type="CDD" id="cd04317">
    <property type="entry name" value="EcAspRS_like_N"/>
    <property type="match status" value="1"/>
</dbReference>
<dbReference type="Gene3D" id="3.30.930.10">
    <property type="entry name" value="Bira Bifunctional Protein, Domain 2"/>
    <property type="match status" value="1"/>
</dbReference>
<dbReference type="Gene3D" id="3.30.1360.30">
    <property type="entry name" value="GAD-like domain"/>
    <property type="match status" value="1"/>
</dbReference>
<dbReference type="Gene3D" id="2.40.50.140">
    <property type="entry name" value="Nucleic acid-binding proteins"/>
    <property type="match status" value="1"/>
</dbReference>
<dbReference type="HAMAP" id="MF_00044">
    <property type="entry name" value="Asp_tRNA_synth_type1"/>
    <property type="match status" value="1"/>
</dbReference>
<dbReference type="InterPro" id="IPR004364">
    <property type="entry name" value="Aa-tRNA-synt_II"/>
</dbReference>
<dbReference type="InterPro" id="IPR006195">
    <property type="entry name" value="aa-tRNA-synth_II"/>
</dbReference>
<dbReference type="InterPro" id="IPR045864">
    <property type="entry name" value="aa-tRNA-synth_II/BPL/LPL"/>
</dbReference>
<dbReference type="InterPro" id="IPR004524">
    <property type="entry name" value="Asp-tRNA-ligase_1"/>
</dbReference>
<dbReference type="InterPro" id="IPR047089">
    <property type="entry name" value="Asp-tRNA-ligase_1_N"/>
</dbReference>
<dbReference type="InterPro" id="IPR002312">
    <property type="entry name" value="Asp/Asn-tRNA-synth_IIb"/>
</dbReference>
<dbReference type="InterPro" id="IPR047090">
    <property type="entry name" value="AspRS_core"/>
</dbReference>
<dbReference type="InterPro" id="IPR004115">
    <property type="entry name" value="GAD-like_sf"/>
</dbReference>
<dbReference type="InterPro" id="IPR029351">
    <property type="entry name" value="GAD_dom"/>
</dbReference>
<dbReference type="InterPro" id="IPR012340">
    <property type="entry name" value="NA-bd_OB-fold"/>
</dbReference>
<dbReference type="InterPro" id="IPR004365">
    <property type="entry name" value="NA-bd_OB_tRNA"/>
</dbReference>
<dbReference type="NCBIfam" id="TIGR00459">
    <property type="entry name" value="aspS_bact"/>
    <property type="match status" value="1"/>
</dbReference>
<dbReference type="NCBIfam" id="NF001750">
    <property type="entry name" value="PRK00476.1"/>
    <property type="match status" value="1"/>
</dbReference>
<dbReference type="PANTHER" id="PTHR22594:SF5">
    <property type="entry name" value="ASPARTATE--TRNA LIGASE, MITOCHONDRIAL"/>
    <property type="match status" value="1"/>
</dbReference>
<dbReference type="PANTHER" id="PTHR22594">
    <property type="entry name" value="ASPARTYL/LYSYL-TRNA SYNTHETASE"/>
    <property type="match status" value="1"/>
</dbReference>
<dbReference type="Pfam" id="PF02938">
    <property type="entry name" value="GAD"/>
    <property type="match status" value="1"/>
</dbReference>
<dbReference type="Pfam" id="PF00152">
    <property type="entry name" value="tRNA-synt_2"/>
    <property type="match status" value="1"/>
</dbReference>
<dbReference type="Pfam" id="PF01336">
    <property type="entry name" value="tRNA_anti-codon"/>
    <property type="match status" value="1"/>
</dbReference>
<dbReference type="PRINTS" id="PR01042">
    <property type="entry name" value="TRNASYNTHASP"/>
</dbReference>
<dbReference type="SUPFAM" id="SSF55681">
    <property type="entry name" value="Class II aaRS and biotin synthetases"/>
    <property type="match status" value="1"/>
</dbReference>
<dbReference type="SUPFAM" id="SSF55261">
    <property type="entry name" value="GAD domain-like"/>
    <property type="match status" value="1"/>
</dbReference>
<dbReference type="SUPFAM" id="SSF50249">
    <property type="entry name" value="Nucleic acid-binding proteins"/>
    <property type="match status" value="1"/>
</dbReference>
<dbReference type="PROSITE" id="PS50862">
    <property type="entry name" value="AA_TRNA_LIGASE_II"/>
    <property type="match status" value="1"/>
</dbReference>
<feature type="chain" id="PRO_1000006678" description="Aspartate--tRNA(Asp/Asn) ligase">
    <location>
        <begin position="1"/>
        <end position="590"/>
    </location>
</feature>
<feature type="region of interest" description="Aspartate" evidence="1">
    <location>
        <begin position="196"/>
        <end position="199"/>
    </location>
</feature>
<feature type="binding site" evidence="1">
    <location>
        <position position="172"/>
    </location>
    <ligand>
        <name>L-aspartate</name>
        <dbReference type="ChEBI" id="CHEBI:29991"/>
    </ligand>
</feature>
<feature type="binding site" evidence="1">
    <location>
        <begin position="218"/>
        <end position="220"/>
    </location>
    <ligand>
        <name>ATP</name>
        <dbReference type="ChEBI" id="CHEBI:30616"/>
    </ligand>
</feature>
<feature type="binding site" evidence="1">
    <location>
        <position position="218"/>
    </location>
    <ligand>
        <name>L-aspartate</name>
        <dbReference type="ChEBI" id="CHEBI:29991"/>
    </ligand>
</feature>
<feature type="binding site" evidence="1">
    <location>
        <position position="227"/>
    </location>
    <ligand>
        <name>ATP</name>
        <dbReference type="ChEBI" id="CHEBI:30616"/>
    </ligand>
</feature>
<feature type="binding site" evidence="1">
    <location>
        <position position="449"/>
    </location>
    <ligand>
        <name>L-aspartate</name>
        <dbReference type="ChEBI" id="CHEBI:29991"/>
    </ligand>
</feature>
<feature type="binding site" evidence="1">
    <location>
        <position position="484"/>
    </location>
    <ligand>
        <name>ATP</name>
        <dbReference type="ChEBI" id="CHEBI:30616"/>
    </ligand>
</feature>
<feature type="binding site" evidence="1">
    <location>
        <position position="491"/>
    </location>
    <ligand>
        <name>L-aspartate</name>
        <dbReference type="ChEBI" id="CHEBI:29991"/>
    </ligand>
</feature>
<feature type="binding site" evidence="1">
    <location>
        <begin position="536"/>
        <end position="539"/>
    </location>
    <ligand>
        <name>ATP</name>
        <dbReference type="ChEBI" id="CHEBI:30616"/>
    </ligand>
</feature>
<feature type="site" description="Important for tRNA non-discrimination" evidence="1">
    <location>
        <position position="30"/>
    </location>
</feature>
<feature type="site" description="Important for tRNA non-discrimination" evidence="1">
    <location>
        <position position="80"/>
    </location>
</feature>
<keyword id="KW-0030">Aminoacyl-tRNA synthetase</keyword>
<keyword id="KW-0067">ATP-binding</keyword>
<keyword id="KW-0963">Cytoplasm</keyword>
<keyword id="KW-0436">Ligase</keyword>
<keyword id="KW-0547">Nucleotide-binding</keyword>
<keyword id="KW-0648">Protein biosynthesis</keyword>
<keyword id="KW-1185">Reference proteome</keyword>
<evidence type="ECO:0000255" key="1">
    <source>
        <dbReference type="HAMAP-Rule" id="MF_00044"/>
    </source>
</evidence>
<name>SYDND_FRATH</name>
<accession>Q2A622</accession>
<gene>
    <name evidence="1" type="primary">aspS</name>
    <name type="ordered locus">FTL_0020</name>
</gene>
<proteinExistence type="inferred from homology"/>
<comment type="function">
    <text evidence="1">Aspartyl-tRNA synthetase with relaxed tRNA specificity since it is able to aspartylate not only its cognate tRNA(Asp) but also tRNA(Asn). Reaction proceeds in two steps: L-aspartate is first activated by ATP to form Asp-AMP and then transferred to the acceptor end of tRNA(Asp/Asn).</text>
</comment>
<comment type="catalytic activity">
    <reaction evidence="1">
        <text>tRNA(Asx) + L-aspartate + ATP = L-aspartyl-tRNA(Asx) + AMP + diphosphate</text>
        <dbReference type="Rhea" id="RHEA:18349"/>
        <dbReference type="Rhea" id="RHEA-COMP:9710"/>
        <dbReference type="Rhea" id="RHEA-COMP:9711"/>
        <dbReference type="ChEBI" id="CHEBI:29991"/>
        <dbReference type="ChEBI" id="CHEBI:30616"/>
        <dbReference type="ChEBI" id="CHEBI:33019"/>
        <dbReference type="ChEBI" id="CHEBI:78442"/>
        <dbReference type="ChEBI" id="CHEBI:78516"/>
        <dbReference type="ChEBI" id="CHEBI:456215"/>
        <dbReference type="EC" id="6.1.1.23"/>
    </reaction>
</comment>
<comment type="subunit">
    <text evidence="1">Homodimer.</text>
</comment>
<comment type="subcellular location">
    <subcellularLocation>
        <location evidence="1">Cytoplasm</location>
    </subcellularLocation>
</comment>
<comment type="similarity">
    <text evidence="1">Belongs to the class-II aminoacyl-tRNA synthetase family. Type 1 subfamily.</text>
</comment>
<protein>
    <recommendedName>
        <fullName evidence="1">Aspartate--tRNA(Asp/Asn) ligase</fullName>
        <ecNumber evidence="1">6.1.1.23</ecNumber>
    </recommendedName>
    <alternativeName>
        <fullName evidence="1">Aspartyl-tRNA synthetase</fullName>
        <shortName evidence="1">AspRS</shortName>
    </alternativeName>
    <alternativeName>
        <fullName evidence="1">Non-discriminating aspartyl-tRNA synthetase</fullName>
        <shortName evidence="1">ND-AspRS</shortName>
    </alternativeName>
</protein>